<protein>
    <recommendedName>
        <fullName>E3 SUMO-protein ligase CBX4</fullName>
        <ecNumber evidence="2">2.3.2.-</ecNumber>
    </recommendedName>
    <alternativeName>
        <fullName>Chromobox protein homolog 4</fullName>
    </alternativeName>
    <alternativeName>
        <fullName evidence="10">E3 SUMO-protein transferase CBX4</fullName>
    </alternativeName>
    <alternativeName>
        <fullName evidence="9">Polycomb 2 homolog</fullName>
        <shortName evidence="9">Pc2</shortName>
        <shortName evidence="9">mPc2</shortName>
    </alternativeName>
</protein>
<gene>
    <name type="primary">Cbx4</name>
    <name type="synonym">Pc2</name>
</gene>
<evidence type="ECO:0000250" key="1"/>
<evidence type="ECO:0000250" key="2">
    <source>
        <dbReference type="UniProtKB" id="O00257"/>
    </source>
</evidence>
<evidence type="ECO:0000255" key="3">
    <source>
        <dbReference type="PROSITE-ProRule" id="PRU00053"/>
    </source>
</evidence>
<evidence type="ECO:0000256" key="4">
    <source>
        <dbReference type="SAM" id="MobiDB-lite"/>
    </source>
</evidence>
<evidence type="ECO:0000269" key="5">
    <source>
    </source>
</evidence>
<evidence type="ECO:0000269" key="6">
    <source>
    </source>
</evidence>
<evidence type="ECO:0000269" key="7">
    <source>
    </source>
</evidence>
<evidence type="ECO:0000303" key="8">
    <source>
    </source>
</evidence>
<evidence type="ECO:0000303" key="9">
    <source>
    </source>
</evidence>
<evidence type="ECO:0000305" key="10"/>
<feature type="chain" id="PRO_0000080207" description="E3 SUMO-protein ligase CBX4">
    <location>
        <begin position="1"/>
        <end position="551"/>
    </location>
</feature>
<feature type="domain" description="Chromo" evidence="3">
    <location>
        <begin position="11"/>
        <end position="69"/>
    </location>
</feature>
<feature type="region of interest" description="Disordered" evidence="4">
    <location>
        <begin position="125"/>
        <end position="152"/>
    </location>
</feature>
<feature type="region of interest" description="Disordered" evidence="4">
    <location>
        <begin position="172"/>
        <end position="193"/>
    </location>
</feature>
<feature type="region of interest" description="Disordered" evidence="4">
    <location>
        <begin position="216"/>
        <end position="244"/>
    </location>
</feature>
<feature type="region of interest" description="Disordered" evidence="4">
    <location>
        <begin position="281"/>
        <end position="399"/>
    </location>
</feature>
<feature type="region of interest" description="Disordered" evidence="4">
    <location>
        <begin position="430"/>
        <end position="451"/>
    </location>
</feature>
<feature type="compositionally biased region" description="Basic and acidic residues" evidence="4">
    <location>
        <begin position="281"/>
        <end position="291"/>
    </location>
</feature>
<feature type="compositionally biased region" description="Basic and acidic residues" evidence="4">
    <location>
        <begin position="298"/>
        <end position="310"/>
    </location>
</feature>
<feature type="compositionally biased region" description="Basic and acidic residues" evidence="4">
    <location>
        <begin position="317"/>
        <end position="332"/>
    </location>
</feature>
<feature type="compositionally biased region" description="Basic residues" evidence="4">
    <location>
        <begin position="381"/>
        <end position="396"/>
    </location>
</feature>
<feature type="modified residue" description="N6-acetyllysine; alternate" evidence="2">
    <location>
        <position position="149"/>
    </location>
</feature>
<feature type="modified residue" description="Phosphoserine" evidence="2">
    <location>
        <position position="182"/>
    </location>
</feature>
<feature type="modified residue" description="Phosphoserine" evidence="2">
    <location>
        <position position="463"/>
    </location>
</feature>
<feature type="cross-link" description="Glycyl lysine isopeptide (Lys-Gly) (interchain with G-Cter in SUMO2)" evidence="2">
    <location>
        <position position="77"/>
    </location>
</feature>
<feature type="cross-link" description="Glycyl lysine isopeptide (Lys-Gly) (interchain with G-Cter in SUMO2)" evidence="2">
    <location>
        <position position="106"/>
    </location>
</feature>
<feature type="cross-link" description="Glycyl lysine isopeptide (Lys-Gly) (interchain with G-Cter in SUMO2)" evidence="2">
    <location>
        <position position="114"/>
    </location>
</feature>
<feature type="cross-link" description="Glycyl lysine isopeptide (Lys-Gly) (interchain with G-Cter in SUMO2)" evidence="2">
    <location>
        <position position="125"/>
    </location>
</feature>
<feature type="cross-link" description="Glycyl lysine isopeptide (Lys-Gly) (interchain with G-Cter in SUMO2); alternate" evidence="2">
    <location>
        <position position="149"/>
    </location>
</feature>
<feature type="cross-link" description="Glycyl lysine isopeptide (Lys-Gly) (interchain with G-Cter in SUMO2)" evidence="2">
    <location>
        <position position="157"/>
    </location>
</feature>
<feature type="cross-link" description="Glycyl lysine isopeptide (Lys-Gly) (interchain with G-Cter in SUMO2)" evidence="2">
    <location>
        <position position="167"/>
    </location>
</feature>
<feature type="cross-link" description="Glycyl lysine isopeptide (Lys-Gly) (interchain with G-Cter in SUMO2)" evidence="2">
    <location>
        <position position="178"/>
    </location>
</feature>
<feature type="cross-link" description="Glycyl lysine isopeptide (Lys-Gly) (interchain with G-Cter in SUMO2)" evidence="2">
    <location>
        <position position="191"/>
    </location>
</feature>
<feature type="cross-link" description="Glycyl lysine isopeptide (Lys-Gly) (interchain with G-Cter in SUMO2)" evidence="2">
    <location>
        <position position="205"/>
    </location>
</feature>
<feature type="cross-link" description="Glycyl lysine isopeptide (Lys-Gly) (interchain with G-Cter in SUMO2)" evidence="2">
    <location>
        <position position="212"/>
    </location>
</feature>
<feature type="cross-link" description="Glycyl lysine isopeptide (Lys-Gly) (interchain with G-Cter in SUMO2)" evidence="2">
    <location>
        <position position="223"/>
    </location>
</feature>
<feature type="cross-link" description="Glycyl lysine isopeptide (Lys-Gly) (interchain with G-Cter in SUMO2)" evidence="2">
    <location>
        <position position="249"/>
    </location>
</feature>
<feature type="cross-link" description="Glycyl lysine isopeptide (Lys-Gly) (interchain with G-Cter in SUMO2)" evidence="2">
    <location>
        <position position="268"/>
    </location>
</feature>
<feature type="cross-link" description="Glycyl lysine isopeptide (Lys-Gly) (interchain with G-Cter in SUMO2)" evidence="2">
    <location>
        <position position="278"/>
    </location>
</feature>
<feature type="cross-link" description="Glycyl lysine isopeptide (Lys-Gly) (interchain with G-Cter in SUMO2)" evidence="2">
    <location>
        <position position="280"/>
    </location>
</feature>
<feature type="cross-link" description="Glycyl lysine isopeptide (Lys-Gly) (interchain with G-Cter in SUMO2)" evidence="2">
    <location>
        <position position="321"/>
    </location>
</feature>
<feature type="cross-link" description="Glycyl lysine isopeptide (Lys-Gly) (interchain with G-Cter in SUMO2)" evidence="2">
    <location>
        <position position="353"/>
    </location>
</feature>
<feature type="cross-link" description="Glycyl lysine isopeptide (Lys-Gly) (interchain with G-Cter in SUMO2)" evidence="2">
    <location>
        <position position="366"/>
    </location>
</feature>
<feature type="cross-link" description="Glycyl lysine isopeptide (Lys-Gly) (interchain with G-Cter in SUMO); alternate" evidence="1">
    <location>
        <position position="490"/>
    </location>
</feature>
<feature type="cross-link" description="Glycyl lysine isopeptide (Lys-Gly) (interchain with G-Cter in SUMO2); alternate" evidence="2">
    <location>
        <position position="490"/>
    </location>
</feature>
<feature type="splice variant" id="VSP_022009" description="In isoform 2." evidence="8">
    <location>
        <begin position="1"/>
        <end position="66"/>
    </location>
</feature>
<feature type="sequence conflict" description="In Ref. 1; AAB96874." evidence="10" ref="1">
    <original>K</original>
    <variation>N</variation>
    <location>
        <position position="77"/>
    </location>
</feature>
<feature type="sequence conflict" description="In Ref. 1; AAB96874." evidence="10" ref="1">
    <original>PG</original>
    <variation>AR</variation>
    <location>
        <begin position="144"/>
        <end position="145"/>
    </location>
</feature>
<dbReference type="EC" id="2.3.2.-" evidence="2"/>
<dbReference type="EMBL" id="U63387">
    <property type="protein sequence ID" value="AAB96874.1"/>
    <property type="molecule type" value="mRNA"/>
</dbReference>
<dbReference type="EMBL" id="BC117801">
    <property type="protein sequence ID" value="AAI17802.1"/>
    <property type="molecule type" value="mRNA"/>
</dbReference>
<dbReference type="EMBL" id="BC117802">
    <property type="protein sequence ID" value="AAI17803.1"/>
    <property type="molecule type" value="mRNA"/>
</dbReference>
<dbReference type="CCDS" id="CCDS25710.1">
    <molecule id="O55187-1"/>
</dbReference>
<dbReference type="RefSeq" id="NP_031651.2">
    <molecule id="O55187-1"/>
    <property type="nucleotide sequence ID" value="NM_007625.3"/>
</dbReference>
<dbReference type="BMRB" id="O55187"/>
<dbReference type="SMR" id="O55187"/>
<dbReference type="BioGRID" id="198537">
    <property type="interactions" value="40"/>
</dbReference>
<dbReference type="FunCoup" id="O55187">
    <property type="interactions" value="2528"/>
</dbReference>
<dbReference type="IntAct" id="O55187">
    <property type="interactions" value="20"/>
</dbReference>
<dbReference type="STRING" id="10090.ENSMUSP00000026665"/>
<dbReference type="GlyGen" id="O55187">
    <property type="glycosylation" value="2 sites"/>
</dbReference>
<dbReference type="iPTMnet" id="O55187"/>
<dbReference type="PhosphoSitePlus" id="O55187"/>
<dbReference type="PaxDb" id="10090-ENSMUSP00000026665"/>
<dbReference type="PeptideAtlas" id="O55187"/>
<dbReference type="ProteomicsDB" id="265570">
    <molecule id="O55187-1"/>
</dbReference>
<dbReference type="ProteomicsDB" id="265571">
    <molecule id="O55187-2"/>
</dbReference>
<dbReference type="Pumba" id="O55187"/>
<dbReference type="Antibodypedia" id="1793">
    <property type="antibodies" value="460 antibodies from 38 providers"/>
</dbReference>
<dbReference type="DNASU" id="12418"/>
<dbReference type="Ensembl" id="ENSMUST00000026665.8">
    <molecule id="O55187-1"/>
    <property type="protein sequence ID" value="ENSMUSP00000026665.8"/>
    <property type="gene ID" value="ENSMUSG00000039989.8"/>
</dbReference>
<dbReference type="GeneID" id="12418"/>
<dbReference type="KEGG" id="mmu:12418"/>
<dbReference type="UCSC" id="uc007mpv.2">
    <molecule id="O55187-1"/>
    <property type="organism name" value="mouse"/>
</dbReference>
<dbReference type="AGR" id="MGI:1195985"/>
<dbReference type="CTD" id="8535"/>
<dbReference type="MGI" id="MGI:1195985">
    <property type="gene designation" value="Cbx4"/>
</dbReference>
<dbReference type="VEuPathDB" id="HostDB:ENSMUSG00000039989"/>
<dbReference type="eggNOG" id="KOG2748">
    <property type="taxonomic scope" value="Eukaryota"/>
</dbReference>
<dbReference type="GeneTree" id="ENSGT00940000160081"/>
<dbReference type="HOGENOM" id="CLU_043955_0_0_1"/>
<dbReference type="InParanoid" id="O55187"/>
<dbReference type="OMA" id="CGYADQE"/>
<dbReference type="OrthoDB" id="1918685at2759"/>
<dbReference type="TreeFam" id="TF106456"/>
<dbReference type="Reactome" id="R-MMU-3108214">
    <property type="pathway name" value="SUMOylation of DNA damage response and repair proteins"/>
</dbReference>
<dbReference type="Reactome" id="R-MMU-3899300">
    <property type="pathway name" value="SUMOylation of transcription cofactors"/>
</dbReference>
<dbReference type="Reactome" id="R-MMU-4551638">
    <property type="pathway name" value="SUMOylation of chromatin organization proteins"/>
</dbReference>
<dbReference type="Reactome" id="R-MMU-4570464">
    <property type="pathway name" value="SUMOylation of RNA binding proteins"/>
</dbReference>
<dbReference type="Reactome" id="R-MMU-8939243">
    <property type="pathway name" value="RUNX1 interacts with co-factors whose precise effect on RUNX1 targets is not known"/>
</dbReference>
<dbReference type="UniPathway" id="UPA00886"/>
<dbReference type="BioGRID-ORCS" id="12418">
    <property type="hits" value="3 hits in 85 CRISPR screens"/>
</dbReference>
<dbReference type="ChiTaRS" id="Cbx4">
    <property type="organism name" value="mouse"/>
</dbReference>
<dbReference type="PRO" id="PR:O55187"/>
<dbReference type="Proteomes" id="UP000000589">
    <property type="component" value="Chromosome 11"/>
</dbReference>
<dbReference type="RNAct" id="O55187">
    <property type="molecule type" value="protein"/>
</dbReference>
<dbReference type="Bgee" id="ENSMUSG00000039989">
    <property type="expression patterns" value="Expressed in olfactory epithelium and 241 other cell types or tissues"/>
</dbReference>
<dbReference type="GO" id="GO:0016604">
    <property type="term" value="C:nuclear body"/>
    <property type="evidence" value="ECO:0000314"/>
    <property type="project" value="MGI"/>
</dbReference>
<dbReference type="GO" id="GO:0016607">
    <property type="term" value="C:nuclear speck"/>
    <property type="evidence" value="ECO:0007669"/>
    <property type="project" value="UniProtKB-SubCell"/>
</dbReference>
<dbReference type="GO" id="GO:0005654">
    <property type="term" value="C:nucleoplasm"/>
    <property type="evidence" value="ECO:0000304"/>
    <property type="project" value="Reactome"/>
</dbReference>
<dbReference type="GO" id="GO:0005634">
    <property type="term" value="C:nucleus"/>
    <property type="evidence" value="ECO:0000314"/>
    <property type="project" value="UniProtKB"/>
</dbReference>
<dbReference type="GO" id="GO:0031519">
    <property type="term" value="C:PcG protein complex"/>
    <property type="evidence" value="ECO:0000250"/>
    <property type="project" value="UniProtKB"/>
</dbReference>
<dbReference type="GO" id="GO:0035102">
    <property type="term" value="C:PRC1 complex"/>
    <property type="evidence" value="ECO:0000250"/>
    <property type="project" value="UniProtKB"/>
</dbReference>
<dbReference type="GO" id="GO:0003682">
    <property type="term" value="F:chromatin binding"/>
    <property type="evidence" value="ECO:0000314"/>
    <property type="project" value="MGI"/>
</dbReference>
<dbReference type="GO" id="GO:0019899">
    <property type="term" value="F:enzyme binding"/>
    <property type="evidence" value="ECO:0007669"/>
    <property type="project" value="Ensembl"/>
</dbReference>
<dbReference type="GO" id="GO:0051219">
    <property type="term" value="F:phosphoprotein binding"/>
    <property type="evidence" value="ECO:0000353"/>
    <property type="project" value="MGI"/>
</dbReference>
<dbReference type="GO" id="GO:0003727">
    <property type="term" value="F:single-stranded RNA binding"/>
    <property type="evidence" value="ECO:0000314"/>
    <property type="project" value="UniProtKB"/>
</dbReference>
<dbReference type="GO" id="GO:0032183">
    <property type="term" value="F:SUMO binding"/>
    <property type="evidence" value="ECO:0000314"/>
    <property type="project" value="MGI"/>
</dbReference>
<dbReference type="GO" id="GO:0061665">
    <property type="term" value="F:SUMO ligase activity"/>
    <property type="evidence" value="ECO:0007669"/>
    <property type="project" value="Ensembl"/>
</dbReference>
<dbReference type="GO" id="GO:0019789">
    <property type="term" value="F:SUMO transferase activity"/>
    <property type="evidence" value="ECO:0000269"/>
    <property type="project" value="Reactome"/>
</dbReference>
<dbReference type="GO" id="GO:0000976">
    <property type="term" value="F:transcription cis-regulatory region binding"/>
    <property type="evidence" value="ECO:0000314"/>
    <property type="project" value="MGI"/>
</dbReference>
<dbReference type="GO" id="GO:0006325">
    <property type="term" value="P:chromatin organization"/>
    <property type="evidence" value="ECO:0007669"/>
    <property type="project" value="UniProtKB-KW"/>
</dbReference>
<dbReference type="GO" id="GO:0000122">
    <property type="term" value="P:negative regulation of transcription by RNA polymerase II"/>
    <property type="evidence" value="ECO:0000314"/>
    <property type="project" value="MGI"/>
</dbReference>
<dbReference type="GO" id="GO:0016925">
    <property type="term" value="P:protein sumoylation"/>
    <property type="evidence" value="ECO:0000315"/>
    <property type="project" value="MGI"/>
</dbReference>
<dbReference type="CDD" id="cd18645">
    <property type="entry name" value="CD_Cbx4"/>
    <property type="match status" value="1"/>
</dbReference>
<dbReference type="FunFam" id="2.40.50.40:FF:000006">
    <property type="entry name" value="Chromobox protein homolog 7"/>
    <property type="match status" value="1"/>
</dbReference>
<dbReference type="Gene3D" id="2.40.50.40">
    <property type="match status" value="1"/>
</dbReference>
<dbReference type="InterPro" id="IPR043531">
    <property type="entry name" value="CBX4"/>
</dbReference>
<dbReference type="InterPro" id="IPR033773">
    <property type="entry name" value="CBX7_C"/>
</dbReference>
<dbReference type="InterPro" id="IPR016197">
    <property type="entry name" value="Chromo-like_dom_sf"/>
</dbReference>
<dbReference type="InterPro" id="IPR000953">
    <property type="entry name" value="Chromo/chromo_shadow_dom"/>
</dbReference>
<dbReference type="InterPro" id="IPR017984">
    <property type="entry name" value="Chromo_dom_subgr"/>
</dbReference>
<dbReference type="InterPro" id="IPR023780">
    <property type="entry name" value="Chromo_domain"/>
</dbReference>
<dbReference type="InterPro" id="IPR023779">
    <property type="entry name" value="Chromodomain_CS"/>
</dbReference>
<dbReference type="PANTHER" id="PTHR46727">
    <property type="entry name" value="E3 SUMO-PROTEIN LIGASE CBX4"/>
    <property type="match status" value="1"/>
</dbReference>
<dbReference type="PANTHER" id="PTHR46727:SF1">
    <property type="entry name" value="E3 SUMO-PROTEIN LIGASE CBX4"/>
    <property type="match status" value="1"/>
</dbReference>
<dbReference type="Pfam" id="PF17218">
    <property type="entry name" value="CBX7_C"/>
    <property type="match status" value="1"/>
</dbReference>
<dbReference type="Pfam" id="PF00385">
    <property type="entry name" value="Chromo"/>
    <property type="match status" value="1"/>
</dbReference>
<dbReference type="PRINTS" id="PR00504">
    <property type="entry name" value="CHROMODOMAIN"/>
</dbReference>
<dbReference type="SMART" id="SM00298">
    <property type="entry name" value="CHROMO"/>
    <property type="match status" value="1"/>
</dbReference>
<dbReference type="SUPFAM" id="SSF54160">
    <property type="entry name" value="Chromo domain-like"/>
    <property type="match status" value="1"/>
</dbReference>
<dbReference type="PROSITE" id="PS00598">
    <property type="entry name" value="CHROMO_1"/>
    <property type="match status" value="1"/>
</dbReference>
<dbReference type="PROSITE" id="PS50013">
    <property type="entry name" value="CHROMO_2"/>
    <property type="match status" value="1"/>
</dbReference>
<comment type="function">
    <text evidence="2">E3 SUMO-protein ligase that catalyzes sumoylation of target proteins by promoting the transfer of SUMO from the E2 enzyme to the substrate. Involved in the sumoylation of HNRNPK, a p53/TP53 transcriptional coactivator, hence indirectly regulates p53/TP53 transcriptional activation resulting in p21/CDKN1A expression.</text>
</comment>
<comment type="function">
    <text evidence="2 5 6">Component of a Polycomb group (PcG) multiprotein PRC1-like complex, a complex class required to maintain the transcriptionally repressive state of many genes, including Hox genes, throughout development (By similarity). PcG PRC1 complex acts via chromatin remodeling and modification of histones; it mediates monoubiquitination of histone H2A 'Lys-119', rendering chromatin heritably changed in its expressibility (By similarity). Binds to histone H3 trimethylated at 'Lys-9' (H3K9me3) (PubMed:16537902). Plays a role in the lineage differentiation of the germ layers in embryonic development (PubMed:22226355).</text>
</comment>
<comment type="pathway">
    <text>Protein modification; protein sumoylation.</text>
</comment>
<comment type="subunit">
    <text evidence="2 5 6 7">Interacts with SUV39H1 and HIPK2 (By similarity). Interacts with CSNK2B (By similarity). Component of a PRC1-like complex (By similarity). The composition of the PRC1 complex differs between the PRC1 complex in pluripotent embryonic stem cells containing RNF2, CBX7 and PCGF2, and the PRC1 complex in differentiating cells containing RNF2, CBX2, CBX4 and BMI1 (PubMed:22226355). Interacts with RNF2 (PubMed:22226355). Interacts (via chromodomain) with histone H3K9Me3 and single-stranded RNA (ssRNA) (PubMed:16537902). Interacts with CHTOP (PubMed:22872859). May interact with H3C15 and H3C1 (By similarity). Interacts with PRDM1 (By similarity).</text>
</comment>
<comment type="subcellular location">
    <subcellularLocation>
        <location evidence="2">Nucleus</location>
    </subcellularLocation>
    <subcellularLocation>
        <location evidence="2">Nucleus speckle</location>
    </subcellularLocation>
</comment>
<comment type="alternative products">
    <event type="alternative splicing"/>
    <isoform>
        <id>O55187-1</id>
        <name>1</name>
        <sequence type="displayed"/>
    </isoform>
    <isoform>
        <id>O55187-2</id>
        <name>2</name>
        <sequence type="described" ref="VSP_022009"/>
    </isoform>
</comment>
<comment type="tissue specificity">
    <text evidence="6">Expressed in embryoid bodies.</text>
</comment>
<comment type="domain">
    <text evidence="1">The polyhistidine repeat may act as a targeting signal to nuclear speckles.</text>
</comment>
<comment type="PTM">
    <text evidence="2">Ubiquitinated. Ubiquitination regulates the function of the Polycomb group (PcG) multiprotein PRC1-like complex. Deubiquitinated by USP26.</text>
</comment>
<organism>
    <name type="scientific">Mus musculus</name>
    <name type="common">Mouse</name>
    <dbReference type="NCBI Taxonomy" id="10090"/>
    <lineage>
        <taxon>Eukaryota</taxon>
        <taxon>Metazoa</taxon>
        <taxon>Chordata</taxon>
        <taxon>Craniata</taxon>
        <taxon>Vertebrata</taxon>
        <taxon>Euteleostomi</taxon>
        <taxon>Mammalia</taxon>
        <taxon>Eutheria</taxon>
        <taxon>Euarchontoglires</taxon>
        <taxon>Glires</taxon>
        <taxon>Rodentia</taxon>
        <taxon>Myomorpha</taxon>
        <taxon>Muroidea</taxon>
        <taxon>Muridae</taxon>
        <taxon>Murinae</taxon>
        <taxon>Mus</taxon>
        <taxon>Mus</taxon>
    </lineage>
</organism>
<sequence length="551" mass="60523">MELPAVGEHVFAVESIEKKRIRKGRVEYLVKWRGWSPKYNTWEPEENILDPRLLIAFQNRERQEQLMGYRKRGPKPKPLVVQVPTFARRSNVLTGLQDSSADNRAKLELGTQGKGQGHQYELNSKKHHQYQPHSKERSGKPPPPGKSGKYYYQLNSKKHHPYQPDPKMYDLQYQGGHKEAPSPTCPDLGTKSHPPDKWAHGAAAKGYLGAVKPLGGGAGAPGKGSEKGPPNGMTPAPKEAVTGNGIGGKMKIVKNKNKNGRIVIVMSKYMENGMQAVKIKSGEAAEGEARSPSHKKRAAEERHPQGDRTFKKAAGASEEKKAEVPCKRREEEALVSGDAQPQDLGSRKLSPTKEAFGEQPLQLTTKPDLLAWDPARSSHPPAHHHHHHHHHHHHHTVGLNLSHARKRCLSETHGEREPCKKRLTARSISTPTCLGGSPVSEHPANVSPTAASLPQPEVILLDSDLDEPIDLRCVKMRSDAGEPPSTLQVKPEAPAVAAVVAPAPASEKPPAEAQEEPVEPLSEFKPFFGNIIITDVTANCLTVTFKEYVTV</sequence>
<name>CBX4_MOUSE</name>
<keyword id="KW-0007">Acetylation</keyword>
<keyword id="KW-0025">Alternative splicing</keyword>
<keyword id="KW-0156">Chromatin regulator</keyword>
<keyword id="KW-1017">Isopeptide bond</keyword>
<keyword id="KW-0539">Nucleus</keyword>
<keyword id="KW-0597">Phosphoprotein</keyword>
<keyword id="KW-1185">Reference proteome</keyword>
<keyword id="KW-0678">Repressor</keyword>
<keyword id="KW-0804">Transcription</keyword>
<keyword id="KW-0805">Transcription regulation</keyword>
<keyword id="KW-0808">Transferase</keyword>
<keyword id="KW-0832">Ubl conjugation</keyword>
<keyword id="KW-0833">Ubl conjugation pathway</keyword>
<reference key="1">
    <citation type="journal article" date="1997" name="J. Mol. Biol.">
        <title>MPc2, a new murine homolog of the Drosophila polycomb protein is a member of the mouse polycomb transcriptional repressor complex.</title>
        <authorList>
            <person name="Alkema M.J."/>
            <person name="Jacobs J."/>
            <person name="Voncken J.W."/>
            <person name="Jenkins N.A."/>
            <person name="Copeland N.G."/>
            <person name="Satijn D.P.E."/>
            <person name="Otte A.P."/>
            <person name="Berns A."/>
            <person name="van Lohuizen M."/>
        </authorList>
    </citation>
    <scope>NUCLEOTIDE SEQUENCE [MRNA] (ISOFORM 1)</scope>
</reference>
<reference key="2">
    <citation type="journal article" date="2004" name="Genome Res.">
        <title>The status, quality, and expansion of the NIH full-length cDNA project: the Mammalian Gene Collection (MGC).</title>
        <authorList>
            <consortium name="The MGC Project Team"/>
        </authorList>
    </citation>
    <scope>NUCLEOTIDE SEQUENCE [LARGE SCALE MRNA] (ISOFORMS 1 AND 2)</scope>
</reference>
<reference key="3">
    <citation type="journal article" date="2006" name="Mol. Cell. Biol.">
        <title>Mouse polycomb proteins bind differentially to methylated histone H3 and RNA and are enriched in facultative heterochromatin.</title>
        <authorList>
            <person name="Bernstein E."/>
            <person name="Duncan E.M."/>
            <person name="Masui O."/>
            <person name="Gil J."/>
            <person name="Heard E."/>
            <person name="Allis C.D."/>
        </authorList>
    </citation>
    <scope>FUNCTION</scope>
    <scope>INTERACTION WITH HISTONE H3K9ME3 AND SSRNA</scope>
</reference>
<reference key="4">
    <citation type="journal article" date="2010" name="Cell">
        <title>A tissue-specific atlas of mouse protein phosphorylation and expression.</title>
        <authorList>
            <person name="Huttlin E.L."/>
            <person name="Jedrychowski M.P."/>
            <person name="Elias J.E."/>
            <person name="Goswami T."/>
            <person name="Rad R."/>
            <person name="Beausoleil S.A."/>
            <person name="Villen J."/>
            <person name="Haas W."/>
            <person name="Sowa M.E."/>
            <person name="Gygi S.P."/>
        </authorList>
    </citation>
    <scope>IDENTIFICATION BY MASS SPECTROMETRY [LARGE SCALE ANALYSIS]</scope>
    <source>
        <tissue>Spleen</tissue>
    </source>
</reference>
<reference key="5">
    <citation type="journal article" date="2012" name="Cell Stem Cell">
        <title>Nonoverlapping functions of the Polycomb group Cbx family of proteins in embryonic stem cells.</title>
        <authorList>
            <person name="Morey L."/>
            <person name="Pascual G."/>
            <person name="Cozzuto L."/>
            <person name="Roma G."/>
            <person name="Wutz A."/>
            <person name="Benitah S.A."/>
            <person name="Di Croce L."/>
        </authorList>
    </citation>
    <scope>INTERACTION WITH RNF2</scope>
    <scope>TISSUE SPECIFICITY</scope>
</reference>
<reference key="6">
    <citation type="journal article" date="2012" name="Mol. Cell. Proteomics">
        <title>Five friends of methylated chromatin target of protein-arginine-methyltransferase[prmt]-1 (chtop), a complex linking arginine methylation to desumoylation.</title>
        <authorList>
            <person name="Fanis P."/>
            <person name="Gillemans N."/>
            <person name="Aghajanirefah A."/>
            <person name="Pourfarzad F."/>
            <person name="Demmers J."/>
            <person name="Esteghamat F."/>
            <person name="Vadlamudi R.K."/>
            <person name="Grosveld F."/>
            <person name="Philipsen S."/>
            <person name="van Dijk T.B."/>
        </authorList>
    </citation>
    <scope>INTERACTION WITH CHTOP</scope>
</reference>
<accession>O55187</accession>
<accession>Q149G5</accession>
<accession>Q149G6</accession>
<proteinExistence type="evidence at protein level"/>